<feature type="chain" id="PRO_1000134476" description="Acetyl-coenzyme A carboxylase carboxyl transferase subunit alpha">
    <location>
        <begin position="1"/>
        <end position="274"/>
    </location>
</feature>
<feature type="domain" description="CoA carboxyltransferase C-terminal" evidence="2">
    <location>
        <begin position="2"/>
        <end position="250"/>
    </location>
</feature>
<keyword id="KW-0067">ATP-binding</keyword>
<keyword id="KW-0963">Cytoplasm</keyword>
<keyword id="KW-0275">Fatty acid biosynthesis</keyword>
<keyword id="KW-0276">Fatty acid metabolism</keyword>
<keyword id="KW-0444">Lipid biosynthesis</keyword>
<keyword id="KW-0443">Lipid metabolism</keyword>
<keyword id="KW-0547">Nucleotide-binding</keyword>
<keyword id="KW-0808">Transferase</keyword>
<dbReference type="EC" id="2.1.3.15" evidence="1"/>
<dbReference type="EMBL" id="CP001056">
    <property type="protein sequence ID" value="ACD23776.1"/>
    <property type="molecule type" value="Genomic_DNA"/>
</dbReference>
<dbReference type="SMR" id="B2THL2"/>
<dbReference type="KEGG" id="cbk:CLL_A1156"/>
<dbReference type="PATRIC" id="fig|935198.13.peg.1102"/>
<dbReference type="HOGENOM" id="CLU_015486_0_2_9"/>
<dbReference type="UniPathway" id="UPA00655">
    <property type="reaction ID" value="UER00711"/>
</dbReference>
<dbReference type="Proteomes" id="UP000001195">
    <property type="component" value="Chromosome"/>
</dbReference>
<dbReference type="GO" id="GO:0009317">
    <property type="term" value="C:acetyl-CoA carboxylase complex"/>
    <property type="evidence" value="ECO:0007669"/>
    <property type="project" value="InterPro"/>
</dbReference>
<dbReference type="GO" id="GO:0003989">
    <property type="term" value="F:acetyl-CoA carboxylase activity"/>
    <property type="evidence" value="ECO:0007669"/>
    <property type="project" value="InterPro"/>
</dbReference>
<dbReference type="GO" id="GO:0005524">
    <property type="term" value="F:ATP binding"/>
    <property type="evidence" value="ECO:0007669"/>
    <property type="project" value="UniProtKB-KW"/>
</dbReference>
<dbReference type="GO" id="GO:0016743">
    <property type="term" value="F:carboxyl- or carbamoyltransferase activity"/>
    <property type="evidence" value="ECO:0007669"/>
    <property type="project" value="UniProtKB-UniRule"/>
</dbReference>
<dbReference type="GO" id="GO:0006633">
    <property type="term" value="P:fatty acid biosynthetic process"/>
    <property type="evidence" value="ECO:0007669"/>
    <property type="project" value="UniProtKB-KW"/>
</dbReference>
<dbReference type="GO" id="GO:2001295">
    <property type="term" value="P:malonyl-CoA biosynthetic process"/>
    <property type="evidence" value="ECO:0007669"/>
    <property type="project" value="UniProtKB-UniRule"/>
</dbReference>
<dbReference type="Gene3D" id="3.90.226.10">
    <property type="entry name" value="2-enoyl-CoA Hydratase, Chain A, domain 1"/>
    <property type="match status" value="1"/>
</dbReference>
<dbReference type="HAMAP" id="MF_00823">
    <property type="entry name" value="AcetylCoA_CT_alpha"/>
    <property type="match status" value="1"/>
</dbReference>
<dbReference type="InterPro" id="IPR001095">
    <property type="entry name" value="Acetyl_CoA_COase_a_su"/>
</dbReference>
<dbReference type="InterPro" id="IPR029045">
    <property type="entry name" value="ClpP/crotonase-like_dom_sf"/>
</dbReference>
<dbReference type="InterPro" id="IPR011763">
    <property type="entry name" value="COA_CT_C"/>
</dbReference>
<dbReference type="NCBIfam" id="TIGR00513">
    <property type="entry name" value="accA"/>
    <property type="match status" value="1"/>
</dbReference>
<dbReference type="NCBIfam" id="NF041504">
    <property type="entry name" value="AccA_sub"/>
    <property type="match status" value="1"/>
</dbReference>
<dbReference type="NCBIfam" id="NF004344">
    <property type="entry name" value="PRK05724.1"/>
    <property type="match status" value="1"/>
</dbReference>
<dbReference type="PANTHER" id="PTHR42853">
    <property type="entry name" value="ACETYL-COENZYME A CARBOXYLASE CARBOXYL TRANSFERASE SUBUNIT ALPHA"/>
    <property type="match status" value="1"/>
</dbReference>
<dbReference type="PANTHER" id="PTHR42853:SF3">
    <property type="entry name" value="ACETYL-COENZYME A CARBOXYLASE CARBOXYL TRANSFERASE SUBUNIT ALPHA, CHLOROPLASTIC"/>
    <property type="match status" value="1"/>
</dbReference>
<dbReference type="Pfam" id="PF03255">
    <property type="entry name" value="ACCA"/>
    <property type="match status" value="1"/>
</dbReference>
<dbReference type="PRINTS" id="PR01069">
    <property type="entry name" value="ACCCTRFRASEA"/>
</dbReference>
<dbReference type="SUPFAM" id="SSF52096">
    <property type="entry name" value="ClpP/crotonase"/>
    <property type="match status" value="1"/>
</dbReference>
<dbReference type="PROSITE" id="PS50989">
    <property type="entry name" value="COA_CT_CTER"/>
    <property type="match status" value="1"/>
</dbReference>
<evidence type="ECO:0000255" key="1">
    <source>
        <dbReference type="HAMAP-Rule" id="MF_00823"/>
    </source>
</evidence>
<evidence type="ECO:0000255" key="2">
    <source>
        <dbReference type="PROSITE-ProRule" id="PRU01137"/>
    </source>
</evidence>
<organism>
    <name type="scientific">Clostridium botulinum (strain Eklund 17B / Type B)</name>
    <dbReference type="NCBI Taxonomy" id="935198"/>
    <lineage>
        <taxon>Bacteria</taxon>
        <taxon>Bacillati</taxon>
        <taxon>Bacillota</taxon>
        <taxon>Clostridia</taxon>
        <taxon>Eubacteriales</taxon>
        <taxon>Clostridiaceae</taxon>
        <taxon>Clostridium</taxon>
    </lineage>
</organism>
<accession>B2THL2</accession>
<sequence length="274" mass="30516">MNKEFIKSIVVSSPWEKVEIARHKDRPTGKYYIDNIFKDFIEFHGDRLFGDDKAVIGGIASFEDISVTVIAITKGANTNENIERNFGMPNPEGYRKALRLMKQAEKFNRPVICFIDTPGAFCGVGAEERGQGSAIANNLFELSRLKTPIISIVIGEGGSGGALALTVADKILMLENAVYSILSPEGFASILWKDSKRVKEAANVMKITAQDLNEFGIIDTVIKEPRGGAHKNPQKQVTLIKKELMNAMNEMKNIETNQMINERYDKFRKIGTLE</sequence>
<proteinExistence type="inferred from homology"/>
<protein>
    <recommendedName>
        <fullName evidence="1">Acetyl-coenzyme A carboxylase carboxyl transferase subunit alpha</fullName>
        <shortName evidence="1">ACCase subunit alpha</shortName>
        <shortName evidence="1">Acetyl-CoA carboxylase carboxyltransferase subunit alpha</shortName>
        <ecNumber evidence="1">2.1.3.15</ecNumber>
    </recommendedName>
</protein>
<name>ACCA_CLOBB</name>
<comment type="function">
    <text evidence="1">Component of the acetyl coenzyme A carboxylase (ACC) complex. First, biotin carboxylase catalyzes the carboxylation of biotin on its carrier protein (BCCP) and then the CO(2) group is transferred by the carboxyltransferase to acetyl-CoA to form malonyl-CoA.</text>
</comment>
<comment type="catalytic activity">
    <reaction evidence="1">
        <text>N(6)-carboxybiotinyl-L-lysyl-[protein] + acetyl-CoA = N(6)-biotinyl-L-lysyl-[protein] + malonyl-CoA</text>
        <dbReference type="Rhea" id="RHEA:54728"/>
        <dbReference type="Rhea" id="RHEA-COMP:10505"/>
        <dbReference type="Rhea" id="RHEA-COMP:10506"/>
        <dbReference type="ChEBI" id="CHEBI:57288"/>
        <dbReference type="ChEBI" id="CHEBI:57384"/>
        <dbReference type="ChEBI" id="CHEBI:83144"/>
        <dbReference type="ChEBI" id="CHEBI:83145"/>
        <dbReference type="EC" id="2.1.3.15"/>
    </reaction>
</comment>
<comment type="pathway">
    <text evidence="1">Lipid metabolism; malonyl-CoA biosynthesis; malonyl-CoA from acetyl-CoA: step 1/1.</text>
</comment>
<comment type="subunit">
    <text evidence="1">Acetyl-CoA carboxylase is a heterohexamer composed of biotin carboxyl carrier protein (AccB), biotin carboxylase (AccC) and two subunits each of ACCase subunit alpha (AccA) and ACCase subunit beta (AccD).</text>
</comment>
<comment type="subcellular location">
    <subcellularLocation>
        <location evidence="1">Cytoplasm</location>
    </subcellularLocation>
</comment>
<comment type="similarity">
    <text evidence="1">Belongs to the AccA family.</text>
</comment>
<reference key="1">
    <citation type="submission" date="2008-04" db="EMBL/GenBank/DDBJ databases">
        <title>Complete sequence of Clostridium botulinum strain Eklund.</title>
        <authorList>
            <person name="Brinkac L.M."/>
            <person name="Brown J.L."/>
            <person name="Bruce D."/>
            <person name="Detter C."/>
            <person name="Munk C."/>
            <person name="Smith L.A."/>
            <person name="Smith T.J."/>
            <person name="Sutton G."/>
            <person name="Brettin T.S."/>
        </authorList>
    </citation>
    <scope>NUCLEOTIDE SEQUENCE [LARGE SCALE GENOMIC DNA]</scope>
    <source>
        <strain>Eklund 17B / Type B</strain>
    </source>
</reference>
<gene>
    <name evidence="1" type="primary">accA</name>
    <name type="ordered locus">CLL_A1156</name>
</gene>